<gene>
    <name evidence="1" type="primary">hldD</name>
    <name type="synonym">rfaD</name>
    <name type="ordered locus">STM3710</name>
</gene>
<reference key="1">
    <citation type="journal article" date="1994" name="J. Bacteriol.">
        <title>Molecular analysis of the rfaD gene, for heptose synthesis, and the rfaF gene, for heptose transfer, in lipopolysaccharide synthesis in Salmonella typhimurium.</title>
        <authorList>
            <person name="Sirisena D.M."/>
            <person name="Maclachlan P.R."/>
            <person name="Liu S.L."/>
            <person name="Hessel A."/>
            <person name="Sanderson K.E."/>
        </authorList>
    </citation>
    <scope>NUCLEOTIDE SEQUENCE [GENOMIC DNA]</scope>
    <source>
        <strain>LT2</strain>
    </source>
</reference>
<reference key="2">
    <citation type="journal article" date="2001" name="Nature">
        <title>Complete genome sequence of Salmonella enterica serovar Typhimurium LT2.</title>
        <authorList>
            <person name="McClelland M."/>
            <person name="Sanderson K.E."/>
            <person name="Spieth J."/>
            <person name="Clifton S.W."/>
            <person name="Latreille P."/>
            <person name="Courtney L."/>
            <person name="Porwollik S."/>
            <person name="Ali J."/>
            <person name="Dante M."/>
            <person name="Du F."/>
            <person name="Hou S."/>
            <person name="Layman D."/>
            <person name="Leonard S."/>
            <person name="Nguyen C."/>
            <person name="Scott K."/>
            <person name="Holmes A."/>
            <person name="Grewal N."/>
            <person name="Mulvaney E."/>
            <person name="Ryan E."/>
            <person name="Sun H."/>
            <person name="Florea L."/>
            <person name="Miller W."/>
            <person name="Stoneking T."/>
            <person name="Nhan M."/>
            <person name="Waterston R."/>
            <person name="Wilson R.K."/>
        </authorList>
    </citation>
    <scope>NUCLEOTIDE SEQUENCE [LARGE SCALE GENOMIC DNA]</scope>
    <source>
        <strain>LT2 / SGSC1412 / ATCC 700720</strain>
    </source>
</reference>
<proteinExistence type="inferred from homology"/>
<organism>
    <name type="scientific">Salmonella typhimurium (strain LT2 / SGSC1412 / ATCC 700720)</name>
    <dbReference type="NCBI Taxonomy" id="99287"/>
    <lineage>
        <taxon>Bacteria</taxon>
        <taxon>Pseudomonadati</taxon>
        <taxon>Pseudomonadota</taxon>
        <taxon>Gammaproteobacteria</taxon>
        <taxon>Enterobacterales</taxon>
        <taxon>Enterobacteriaceae</taxon>
        <taxon>Salmonella</taxon>
    </lineage>
</organism>
<dbReference type="EC" id="5.1.3.20" evidence="1"/>
<dbReference type="EMBL" id="U06472">
    <property type="protein sequence ID" value="AAA59064.1"/>
    <property type="molecule type" value="Genomic_DNA"/>
</dbReference>
<dbReference type="EMBL" id="AE006468">
    <property type="protein sequence ID" value="AAL22569.1"/>
    <property type="molecule type" value="Genomic_DNA"/>
</dbReference>
<dbReference type="RefSeq" id="NP_462610.1">
    <property type="nucleotide sequence ID" value="NC_003197.2"/>
</dbReference>
<dbReference type="RefSeq" id="WP_000587771.1">
    <property type="nucleotide sequence ID" value="NC_003197.2"/>
</dbReference>
<dbReference type="SMR" id="P67912"/>
<dbReference type="STRING" id="99287.STM3710"/>
<dbReference type="PaxDb" id="99287-STM3710"/>
<dbReference type="GeneID" id="1255234"/>
<dbReference type="KEGG" id="stm:STM3710"/>
<dbReference type="PATRIC" id="fig|99287.12.peg.3924"/>
<dbReference type="HOGENOM" id="CLU_007383_1_3_6"/>
<dbReference type="OMA" id="FSKLCMD"/>
<dbReference type="PhylomeDB" id="P67912"/>
<dbReference type="BioCyc" id="SENT99287:STM3710-MONOMER"/>
<dbReference type="UniPathway" id="UPA00356">
    <property type="reaction ID" value="UER00440"/>
</dbReference>
<dbReference type="UniPathway" id="UPA00958"/>
<dbReference type="Proteomes" id="UP000001014">
    <property type="component" value="Chromosome"/>
</dbReference>
<dbReference type="GO" id="GO:0008712">
    <property type="term" value="F:ADP-glyceromanno-heptose 6-epimerase activity"/>
    <property type="evidence" value="ECO:0007669"/>
    <property type="project" value="UniProtKB-UniRule"/>
</dbReference>
<dbReference type="GO" id="GO:0050661">
    <property type="term" value="F:NADP binding"/>
    <property type="evidence" value="ECO:0007669"/>
    <property type="project" value="InterPro"/>
</dbReference>
<dbReference type="GO" id="GO:0097171">
    <property type="term" value="P:ADP-L-glycero-beta-D-manno-heptose biosynthetic process"/>
    <property type="evidence" value="ECO:0007669"/>
    <property type="project" value="UniProtKB-UniPathway"/>
</dbReference>
<dbReference type="GO" id="GO:0009244">
    <property type="term" value="P:lipopolysaccharide core region biosynthetic process"/>
    <property type="evidence" value="ECO:0007669"/>
    <property type="project" value="UniProtKB-UniPathway"/>
</dbReference>
<dbReference type="CDD" id="cd05248">
    <property type="entry name" value="ADP_GME_SDR_e"/>
    <property type="match status" value="1"/>
</dbReference>
<dbReference type="Gene3D" id="3.40.50.720">
    <property type="entry name" value="NAD(P)-binding Rossmann-like Domain"/>
    <property type="match status" value="1"/>
</dbReference>
<dbReference type="Gene3D" id="3.90.25.10">
    <property type="entry name" value="UDP-galactose 4-epimerase, domain 1"/>
    <property type="match status" value="1"/>
</dbReference>
<dbReference type="HAMAP" id="MF_01601">
    <property type="entry name" value="Heptose_epimerase"/>
    <property type="match status" value="1"/>
</dbReference>
<dbReference type="InterPro" id="IPR001509">
    <property type="entry name" value="Epimerase_deHydtase"/>
</dbReference>
<dbReference type="InterPro" id="IPR011912">
    <property type="entry name" value="Heptose_epim"/>
</dbReference>
<dbReference type="InterPro" id="IPR036291">
    <property type="entry name" value="NAD(P)-bd_dom_sf"/>
</dbReference>
<dbReference type="NCBIfam" id="TIGR02197">
    <property type="entry name" value="heptose_epim"/>
    <property type="match status" value="1"/>
</dbReference>
<dbReference type="NCBIfam" id="NF008360">
    <property type="entry name" value="PRK11150.1"/>
    <property type="match status" value="1"/>
</dbReference>
<dbReference type="PANTHER" id="PTHR43103:SF3">
    <property type="entry name" value="ADP-L-GLYCERO-D-MANNO-HEPTOSE-6-EPIMERASE"/>
    <property type="match status" value="1"/>
</dbReference>
<dbReference type="PANTHER" id="PTHR43103">
    <property type="entry name" value="NUCLEOSIDE-DIPHOSPHATE-SUGAR EPIMERASE"/>
    <property type="match status" value="1"/>
</dbReference>
<dbReference type="Pfam" id="PF01370">
    <property type="entry name" value="Epimerase"/>
    <property type="match status" value="1"/>
</dbReference>
<dbReference type="SUPFAM" id="SSF51735">
    <property type="entry name" value="NAD(P)-binding Rossmann-fold domains"/>
    <property type="match status" value="1"/>
</dbReference>
<evidence type="ECO:0000255" key="1">
    <source>
        <dbReference type="HAMAP-Rule" id="MF_01601"/>
    </source>
</evidence>
<protein>
    <recommendedName>
        <fullName evidence="1">ADP-L-glycero-D-manno-heptose-6-epimerase</fullName>
        <ecNumber evidence="1">5.1.3.20</ecNumber>
    </recommendedName>
    <alternativeName>
        <fullName evidence="1">ADP-L-glycero-beta-D-manno-heptose-6-epimerase</fullName>
        <shortName evidence="1">ADP-glyceromanno-heptose 6-epimerase</shortName>
        <shortName evidence="1">ADP-hep 6-epimerase</shortName>
        <shortName evidence="1">AGME</shortName>
    </alternativeName>
</protein>
<accession>P67912</accession>
<accession>P37420</accession>
<feature type="chain" id="PRO_0000205809" description="ADP-L-glycero-D-manno-heptose-6-epimerase">
    <location>
        <begin position="1"/>
        <end position="310"/>
    </location>
</feature>
<feature type="active site" description="Proton acceptor" evidence="1">
    <location>
        <position position="140"/>
    </location>
</feature>
<feature type="active site" description="Proton acceptor" evidence="1">
    <location>
        <position position="178"/>
    </location>
</feature>
<feature type="binding site" evidence="1">
    <location>
        <begin position="10"/>
        <end position="11"/>
    </location>
    <ligand>
        <name>NADP(+)</name>
        <dbReference type="ChEBI" id="CHEBI:58349"/>
    </ligand>
</feature>
<feature type="binding site" evidence="1">
    <location>
        <begin position="31"/>
        <end position="32"/>
    </location>
    <ligand>
        <name>NADP(+)</name>
        <dbReference type="ChEBI" id="CHEBI:58349"/>
    </ligand>
</feature>
<feature type="binding site" evidence="1">
    <location>
        <position position="38"/>
    </location>
    <ligand>
        <name>NADP(+)</name>
        <dbReference type="ChEBI" id="CHEBI:58349"/>
    </ligand>
</feature>
<feature type="binding site" evidence="1">
    <location>
        <position position="53"/>
    </location>
    <ligand>
        <name>NADP(+)</name>
        <dbReference type="ChEBI" id="CHEBI:58349"/>
    </ligand>
</feature>
<feature type="binding site" evidence="1">
    <location>
        <begin position="75"/>
        <end position="79"/>
    </location>
    <ligand>
        <name>NADP(+)</name>
        <dbReference type="ChEBI" id="CHEBI:58349"/>
    </ligand>
</feature>
<feature type="binding site" evidence="1">
    <location>
        <position position="92"/>
    </location>
    <ligand>
        <name>NADP(+)</name>
        <dbReference type="ChEBI" id="CHEBI:58349"/>
    </ligand>
</feature>
<feature type="binding site" evidence="1">
    <location>
        <position position="144"/>
    </location>
    <ligand>
        <name>NADP(+)</name>
        <dbReference type="ChEBI" id="CHEBI:58349"/>
    </ligand>
</feature>
<feature type="binding site" evidence="1">
    <location>
        <position position="169"/>
    </location>
    <ligand>
        <name>substrate</name>
    </ligand>
</feature>
<feature type="binding site" evidence="1">
    <location>
        <position position="170"/>
    </location>
    <ligand>
        <name>NADP(+)</name>
        <dbReference type="ChEBI" id="CHEBI:58349"/>
    </ligand>
</feature>
<feature type="binding site" evidence="1">
    <location>
        <position position="178"/>
    </location>
    <ligand>
        <name>NADP(+)</name>
        <dbReference type="ChEBI" id="CHEBI:58349"/>
    </ligand>
</feature>
<feature type="binding site" evidence="1">
    <location>
        <position position="180"/>
    </location>
    <ligand>
        <name>substrate</name>
    </ligand>
</feature>
<feature type="binding site" evidence="1">
    <location>
        <position position="187"/>
    </location>
    <ligand>
        <name>substrate</name>
    </ligand>
</feature>
<feature type="binding site" evidence="1">
    <location>
        <begin position="201"/>
        <end position="204"/>
    </location>
    <ligand>
        <name>substrate</name>
    </ligand>
</feature>
<feature type="binding site" evidence="1">
    <location>
        <position position="209"/>
    </location>
    <ligand>
        <name>substrate</name>
    </ligand>
</feature>
<feature type="binding site" evidence="1">
    <location>
        <position position="272"/>
    </location>
    <ligand>
        <name>substrate</name>
    </ligand>
</feature>
<comment type="function">
    <text evidence="1">Catalyzes the interconversion between ADP-D-glycero-beta-D-manno-heptose and ADP-L-glycero-beta-D-manno-heptose via an epimerization at carbon 6 of the heptose.</text>
</comment>
<comment type="catalytic activity">
    <reaction evidence="1">
        <text>ADP-D-glycero-beta-D-manno-heptose = ADP-L-glycero-beta-D-manno-heptose</text>
        <dbReference type="Rhea" id="RHEA:17577"/>
        <dbReference type="ChEBI" id="CHEBI:59967"/>
        <dbReference type="ChEBI" id="CHEBI:61506"/>
        <dbReference type="EC" id="5.1.3.20"/>
    </reaction>
</comment>
<comment type="cofactor">
    <cofactor evidence="1">
        <name>NADP(+)</name>
        <dbReference type="ChEBI" id="CHEBI:58349"/>
    </cofactor>
    <text evidence="1">Binds 1 NADP(+) per subunit.</text>
</comment>
<comment type="pathway">
    <text evidence="1">Nucleotide-sugar biosynthesis; ADP-L-glycero-beta-D-manno-heptose biosynthesis; ADP-L-glycero-beta-D-manno-heptose from D-glycero-beta-D-manno-heptose 7-phosphate: step 4/4.</text>
</comment>
<comment type="pathway">
    <text>Bacterial outer membrane biogenesis; LPS core biosynthesis.</text>
</comment>
<comment type="subunit">
    <text evidence="1">Homopentamer.</text>
</comment>
<comment type="domain">
    <text evidence="1">Contains a large N-terminal NADP-binding domain, and a smaller C-terminal substrate-binding domain.</text>
</comment>
<comment type="similarity">
    <text evidence="1">Belongs to the NAD(P)-dependent epimerase/dehydratase family. HldD subfamily.</text>
</comment>
<keyword id="KW-0119">Carbohydrate metabolism</keyword>
<keyword id="KW-0413">Isomerase</keyword>
<keyword id="KW-0521">NADP</keyword>
<keyword id="KW-1185">Reference proteome</keyword>
<sequence length="310" mass="34849">MIIVTGGAGFIGSNIVKALNDKGITDILVVDNLKDGTKFVNLVDLNIADYMDKEDFLIQIMSGEELGDIEAIFHEGACSSTTEWDGKYMMDNNYQYSKELLHYCLEREIPFLYASSAATYGGRTSDFIESREYEKPLNVYGYSKFLFDEYVRQILPEANSQIVGFRYFNVYGPREGHKGSMASVAFHLNTQLNNGESPKLFEGSENFKRDFVYVGDVAAVNLWFLESGKSGIFNLGTGRAESFQAVADATLAYHKKGSIEYIPFPDKLKGRYQAFTQADLTNLRNAGYDKPFKTVAEGVTEYMAWLNRDA</sequence>
<name>HLDD_SALTY</name>